<dbReference type="EMBL" id="CP001213">
    <property type="protein sequence ID" value="ACL28663.1"/>
    <property type="molecule type" value="Genomic_DNA"/>
</dbReference>
<dbReference type="RefSeq" id="WP_004268570.1">
    <property type="nucleotide sequence ID" value="NC_011835.1"/>
</dbReference>
<dbReference type="SMR" id="B8DW12"/>
<dbReference type="STRING" id="442563.BLA_0361"/>
<dbReference type="GeneID" id="89493878"/>
<dbReference type="KEGG" id="bla:BLA_0361"/>
<dbReference type="HOGENOM" id="CLU_122625_1_3_11"/>
<dbReference type="Proteomes" id="UP000002456">
    <property type="component" value="Chromosome"/>
</dbReference>
<dbReference type="GO" id="GO:1990904">
    <property type="term" value="C:ribonucleoprotein complex"/>
    <property type="evidence" value="ECO:0007669"/>
    <property type="project" value="UniProtKB-KW"/>
</dbReference>
<dbReference type="GO" id="GO:0005840">
    <property type="term" value="C:ribosome"/>
    <property type="evidence" value="ECO:0007669"/>
    <property type="project" value="UniProtKB-KW"/>
</dbReference>
<dbReference type="GO" id="GO:0003735">
    <property type="term" value="F:structural constituent of ribosome"/>
    <property type="evidence" value="ECO:0007669"/>
    <property type="project" value="InterPro"/>
</dbReference>
<dbReference type="GO" id="GO:0000049">
    <property type="term" value="F:tRNA binding"/>
    <property type="evidence" value="ECO:0007669"/>
    <property type="project" value="UniProtKB-UniRule"/>
</dbReference>
<dbReference type="GO" id="GO:0006412">
    <property type="term" value="P:translation"/>
    <property type="evidence" value="ECO:0007669"/>
    <property type="project" value="UniProtKB-UniRule"/>
</dbReference>
<dbReference type="FunFam" id="3.30.70.600:FF:000001">
    <property type="entry name" value="30S ribosomal protein S10"/>
    <property type="match status" value="1"/>
</dbReference>
<dbReference type="Gene3D" id="3.30.70.600">
    <property type="entry name" value="Ribosomal protein S10 domain"/>
    <property type="match status" value="1"/>
</dbReference>
<dbReference type="HAMAP" id="MF_00508">
    <property type="entry name" value="Ribosomal_uS10"/>
    <property type="match status" value="1"/>
</dbReference>
<dbReference type="InterPro" id="IPR001848">
    <property type="entry name" value="Ribosomal_uS10"/>
</dbReference>
<dbReference type="InterPro" id="IPR018268">
    <property type="entry name" value="Ribosomal_uS10_CS"/>
</dbReference>
<dbReference type="InterPro" id="IPR027486">
    <property type="entry name" value="Ribosomal_uS10_dom"/>
</dbReference>
<dbReference type="InterPro" id="IPR036838">
    <property type="entry name" value="Ribosomal_uS10_dom_sf"/>
</dbReference>
<dbReference type="NCBIfam" id="NF001861">
    <property type="entry name" value="PRK00596.1"/>
    <property type="match status" value="1"/>
</dbReference>
<dbReference type="NCBIfam" id="TIGR01049">
    <property type="entry name" value="rpsJ_bact"/>
    <property type="match status" value="1"/>
</dbReference>
<dbReference type="PANTHER" id="PTHR11700">
    <property type="entry name" value="30S RIBOSOMAL PROTEIN S10 FAMILY MEMBER"/>
    <property type="match status" value="1"/>
</dbReference>
<dbReference type="Pfam" id="PF00338">
    <property type="entry name" value="Ribosomal_S10"/>
    <property type="match status" value="1"/>
</dbReference>
<dbReference type="PRINTS" id="PR00971">
    <property type="entry name" value="RIBOSOMALS10"/>
</dbReference>
<dbReference type="SMART" id="SM01403">
    <property type="entry name" value="Ribosomal_S10"/>
    <property type="match status" value="1"/>
</dbReference>
<dbReference type="SUPFAM" id="SSF54999">
    <property type="entry name" value="Ribosomal protein S10"/>
    <property type="match status" value="1"/>
</dbReference>
<dbReference type="PROSITE" id="PS00361">
    <property type="entry name" value="RIBOSOMAL_S10"/>
    <property type="match status" value="1"/>
</dbReference>
<reference key="1">
    <citation type="journal article" date="2009" name="J. Bacteriol.">
        <title>Genome sequence of the probiotic bacterium Bifidobacterium animalis subsp. lactis AD011.</title>
        <authorList>
            <person name="Kim J.F."/>
            <person name="Jeong H."/>
            <person name="Yu D.S."/>
            <person name="Choi S.-H."/>
            <person name="Hur C.-G."/>
            <person name="Park M.-S."/>
            <person name="Yoon S.H."/>
            <person name="Kim D.-W."/>
            <person name="Ji G.E."/>
            <person name="Park H.-S."/>
            <person name="Oh T.K."/>
        </authorList>
    </citation>
    <scope>NUCLEOTIDE SEQUENCE [LARGE SCALE GENOMIC DNA]</scope>
    <source>
        <strain>AD011</strain>
    </source>
</reference>
<keyword id="KW-1185">Reference proteome</keyword>
<keyword id="KW-0687">Ribonucleoprotein</keyword>
<keyword id="KW-0689">Ribosomal protein</keyword>
<accession>B8DW12</accession>
<proteinExistence type="inferred from homology"/>
<name>RS10_BIFA0</name>
<protein>
    <recommendedName>
        <fullName evidence="1">Small ribosomal subunit protein uS10</fullName>
    </recommendedName>
    <alternativeName>
        <fullName evidence="2">30S ribosomal protein S10</fullName>
    </alternativeName>
</protein>
<evidence type="ECO:0000255" key="1">
    <source>
        <dbReference type="HAMAP-Rule" id="MF_00508"/>
    </source>
</evidence>
<evidence type="ECO:0000305" key="2"/>
<comment type="function">
    <text evidence="1">Involved in the binding of tRNA to the ribosomes.</text>
</comment>
<comment type="subunit">
    <text evidence="1">Part of the 30S ribosomal subunit.</text>
</comment>
<comment type="similarity">
    <text evidence="1">Belongs to the universal ribosomal protein uS10 family.</text>
</comment>
<sequence>MAGQKIRIRLKSYDHEVIDQSAKKIVETVTNAGATVVGPVPLPTEKNVYCVIRSPHKYKDSREHFEMRTHKRLIDIVDPTPKAVDSLMHIDLPADVNIEIKL</sequence>
<organism>
    <name type="scientific">Bifidobacterium animalis subsp. lactis (strain AD011)</name>
    <dbReference type="NCBI Taxonomy" id="442563"/>
    <lineage>
        <taxon>Bacteria</taxon>
        <taxon>Bacillati</taxon>
        <taxon>Actinomycetota</taxon>
        <taxon>Actinomycetes</taxon>
        <taxon>Bifidobacteriales</taxon>
        <taxon>Bifidobacteriaceae</taxon>
        <taxon>Bifidobacterium</taxon>
    </lineage>
</organism>
<gene>
    <name evidence="1" type="primary">rpsJ</name>
    <name type="ordered locus">BLA_0361</name>
</gene>
<feature type="chain" id="PRO_1000196287" description="Small ribosomal subunit protein uS10">
    <location>
        <begin position="1"/>
        <end position="102"/>
    </location>
</feature>